<keyword id="KW-0238">DNA-binding</keyword>
<keyword id="KW-0678">Repressor</keyword>
<keyword id="KW-0749">Sporulation</keyword>
<keyword id="KW-0804">Transcription</keyword>
<keyword id="KW-0805">Transcription regulation</keyword>
<proteinExistence type="inferred from homology"/>
<name>HPR_BACP2</name>
<accession>A8FBL1</accession>
<dbReference type="EMBL" id="CP000813">
    <property type="protein sequence ID" value="ABV61628.1"/>
    <property type="molecule type" value="Genomic_DNA"/>
</dbReference>
<dbReference type="RefSeq" id="WP_012009452.1">
    <property type="nucleotide sequence ID" value="NZ_VEIS01000007.1"/>
</dbReference>
<dbReference type="SMR" id="A8FBL1"/>
<dbReference type="STRING" id="315750.BPUM_0944"/>
<dbReference type="GeneID" id="5620208"/>
<dbReference type="KEGG" id="bpu:BPUM_0944"/>
<dbReference type="eggNOG" id="COG1846">
    <property type="taxonomic scope" value="Bacteria"/>
</dbReference>
<dbReference type="HOGENOM" id="CLU_115790_0_0_9"/>
<dbReference type="OrthoDB" id="2393954at2"/>
<dbReference type="Proteomes" id="UP000001355">
    <property type="component" value="Chromosome"/>
</dbReference>
<dbReference type="GO" id="GO:0003677">
    <property type="term" value="F:DNA binding"/>
    <property type="evidence" value="ECO:0007669"/>
    <property type="project" value="UniProtKB-UniRule"/>
</dbReference>
<dbReference type="GO" id="GO:0003700">
    <property type="term" value="F:DNA-binding transcription factor activity"/>
    <property type="evidence" value="ECO:0007669"/>
    <property type="project" value="UniProtKB-UniRule"/>
</dbReference>
<dbReference type="GO" id="GO:0045892">
    <property type="term" value="P:negative regulation of DNA-templated transcription"/>
    <property type="evidence" value="ECO:0007669"/>
    <property type="project" value="UniProtKB-UniRule"/>
</dbReference>
<dbReference type="GO" id="GO:0006950">
    <property type="term" value="P:response to stress"/>
    <property type="evidence" value="ECO:0007669"/>
    <property type="project" value="TreeGrafter"/>
</dbReference>
<dbReference type="GO" id="GO:0030435">
    <property type="term" value="P:sporulation resulting in formation of a cellular spore"/>
    <property type="evidence" value="ECO:0007669"/>
    <property type="project" value="UniProtKB-UniRule"/>
</dbReference>
<dbReference type="Gene3D" id="1.10.10.10">
    <property type="entry name" value="Winged helix-like DNA-binding domain superfamily/Winged helix DNA-binding domain"/>
    <property type="match status" value="1"/>
</dbReference>
<dbReference type="HAMAP" id="MF_01911">
    <property type="entry name" value="HTH_type_Hpr"/>
    <property type="match status" value="1"/>
</dbReference>
<dbReference type="InterPro" id="IPR000835">
    <property type="entry name" value="HTH_MarR-typ"/>
</dbReference>
<dbReference type="InterPro" id="IPR023488">
    <property type="entry name" value="HTH_tscrpt_reg_Hpr"/>
</dbReference>
<dbReference type="InterPro" id="IPR039422">
    <property type="entry name" value="MarR/SlyA-like"/>
</dbReference>
<dbReference type="InterPro" id="IPR023187">
    <property type="entry name" value="Tscrpt_reg_MarR-type_CS"/>
</dbReference>
<dbReference type="InterPro" id="IPR036388">
    <property type="entry name" value="WH-like_DNA-bd_sf"/>
</dbReference>
<dbReference type="InterPro" id="IPR036390">
    <property type="entry name" value="WH_DNA-bd_sf"/>
</dbReference>
<dbReference type="NCBIfam" id="NF010349">
    <property type="entry name" value="PRK13777.1"/>
    <property type="match status" value="1"/>
</dbReference>
<dbReference type="PANTHER" id="PTHR33164:SF58">
    <property type="entry name" value="DNA-BINDING TRANSCRIPTIONAL REPRESSOR SCOC"/>
    <property type="match status" value="1"/>
</dbReference>
<dbReference type="PANTHER" id="PTHR33164">
    <property type="entry name" value="TRANSCRIPTIONAL REGULATOR, MARR FAMILY"/>
    <property type="match status" value="1"/>
</dbReference>
<dbReference type="Pfam" id="PF01047">
    <property type="entry name" value="MarR"/>
    <property type="match status" value="1"/>
</dbReference>
<dbReference type="SMART" id="SM00347">
    <property type="entry name" value="HTH_MARR"/>
    <property type="match status" value="1"/>
</dbReference>
<dbReference type="SUPFAM" id="SSF46785">
    <property type="entry name" value="Winged helix' DNA-binding domain"/>
    <property type="match status" value="1"/>
</dbReference>
<dbReference type="PROSITE" id="PS01117">
    <property type="entry name" value="HTH_MARR_1"/>
    <property type="match status" value="1"/>
</dbReference>
<dbReference type="PROSITE" id="PS50995">
    <property type="entry name" value="HTH_MARR_2"/>
    <property type="match status" value="1"/>
</dbReference>
<protein>
    <recommendedName>
        <fullName evidence="1">HTH-type transcriptional regulator Hpr</fullName>
    </recommendedName>
    <alternativeName>
        <fullName evidence="1">Protease production regulatory protein Hpr</fullName>
    </alternativeName>
</protein>
<feature type="chain" id="PRO_0000343625" description="HTH-type transcriptional regulator Hpr">
    <location>
        <begin position="1"/>
        <end position="206"/>
    </location>
</feature>
<feature type="domain" description="HTH marR-type" evidence="1">
    <location>
        <begin position="13"/>
        <end position="157"/>
    </location>
</feature>
<feature type="DNA-binding region" description="H-T-H motif" evidence="1">
    <location>
        <begin position="63"/>
        <end position="86"/>
    </location>
</feature>
<feature type="region of interest" description="Disordered" evidence="2">
    <location>
        <begin position="186"/>
        <end position="206"/>
    </location>
</feature>
<comment type="function">
    <text evidence="1">Negative regulator of protease production and sporulation.</text>
</comment>
<comment type="subunit">
    <text evidence="1">Homodimer.</text>
</comment>
<reference key="1">
    <citation type="journal article" date="2007" name="PLoS ONE">
        <title>Paradoxical DNA repair and peroxide resistance gene conservation in Bacillus pumilus SAFR-032.</title>
        <authorList>
            <person name="Gioia J."/>
            <person name="Yerrapragada S."/>
            <person name="Qin X."/>
            <person name="Jiang H."/>
            <person name="Igboeli O.C."/>
            <person name="Muzny D."/>
            <person name="Dugan-Rocha S."/>
            <person name="Ding Y."/>
            <person name="Hawes A."/>
            <person name="Liu W."/>
            <person name="Perez L."/>
            <person name="Kovar C."/>
            <person name="Dinh H."/>
            <person name="Lee S."/>
            <person name="Nazareth L."/>
            <person name="Blyth P."/>
            <person name="Holder M."/>
            <person name="Buhay C."/>
            <person name="Tirumalai M.R."/>
            <person name="Liu Y."/>
            <person name="Dasgupta I."/>
            <person name="Bokhetache L."/>
            <person name="Fujita M."/>
            <person name="Karouia F."/>
            <person name="Eswara Moorthy P."/>
            <person name="Siefert J."/>
            <person name="Uzman A."/>
            <person name="Buzumbo P."/>
            <person name="Verma A."/>
            <person name="Zwiya H."/>
            <person name="McWilliams B.D."/>
            <person name="Olowu A."/>
            <person name="Clinkenbeard K.D."/>
            <person name="Newcombe D."/>
            <person name="Golebiewski L."/>
            <person name="Petrosino J.F."/>
            <person name="Nicholson W.L."/>
            <person name="Fox G.E."/>
            <person name="Venkateswaran K."/>
            <person name="Highlander S.K."/>
            <person name="Weinstock G.M."/>
        </authorList>
    </citation>
    <scope>NUCLEOTIDE SEQUENCE [LARGE SCALE GENOMIC DNA]</scope>
    <source>
        <strain>SAFR-032</strain>
    </source>
</reference>
<organism>
    <name type="scientific">Bacillus pumilus (strain SAFR-032)</name>
    <dbReference type="NCBI Taxonomy" id="315750"/>
    <lineage>
        <taxon>Bacteria</taxon>
        <taxon>Bacillati</taxon>
        <taxon>Bacillota</taxon>
        <taxon>Bacilli</taxon>
        <taxon>Bacillales</taxon>
        <taxon>Bacillaceae</taxon>
        <taxon>Bacillus</taxon>
    </lineage>
</organism>
<sequence length="206" mass="24025">MNHSEQPFDVKEALLFSQRMAQLSKALWKSIEKDWQQWIKPYNLNINEHHILWIAYQLKGASISEIAKFGVMHVSTAFNFSKKLEERGFLKFSKKLNDKRNTYIELTPKGEETFHKLLEDYDPARTGIVKGAQPLHDIYGKFPEILEMMCIIRNIYGEDFMEIFEKSFSNIEKDFLNERGRVTKKSEELEDSADAAEKAAKANQIV</sequence>
<gene>
    <name evidence="1" type="primary">hpr</name>
    <name type="ordered locus">BPUM_0944</name>
</gene>
<evidence type="ECO:0000255" key="1">
    <source>
        <dbReference type="HAMAP-Rule" id="MF_01911"/>
    </source>
</evidence>
<evidence type="ECO:0000256" key="2">
    <source>
        <dbReference type="SAM" id="MobiDB-lite"/>
    </source>
</evidence>